<feature type="chain" id="PRO_0000154484" description="Anthranilate phosphoribosyltransferase">
    <location>
        <begin position="1"/>
        <end position="331"/>
    </location>
</feature>
<feature type="binding site" evidence="1">
    <location>
        <position position="78"/>
    </location>
    <ligand>
        <name>5-phospho-alpha-D-ribose 1-diphosphate</name>
        <dbReference type="ChEBI" id="CHEBI:58017"/>
    </ligand>
</feature>
<feature type="binding site" evidence="1">
    <location>
        <position position="78"/>
    </location>
    <ligand>
        <name>anthranilate</name>
        <dbReference type="ChEBI" id="CHEBI:16567"/>
        <label>1</label>
    </ligand>
</feature>
<feature type="binding site" evidence="1">
    <location>
        <begin position="81"/>
        <end position="82"/>
    </location>
    <ligand>
        <name>5-phospho-alpha-D-ribose 1-diphosphate</name>
        <dbReference type="ChEBI" id="CHEBI:58017"/>
    </ligand>
</feature>
<feature type="binding site" evidence="1">
    <location>
        <position position="86"/>
    </location>
    <ligand>
        <name>5-phospho-alpha-D-ribose 1-diphosphate</name>
        <dbReference type="ChEBI" id="CHEBI:58017"/>
    </ligand>
</feature>
<feature type="binding site" evidence="1">
    <location>
        <begin position="88"/>
        <end position="91"/>
    </location>
    <ligand>
        <name>5-phospho-alpha-D-ribose 1-diphosphate</name>
        <dbReference type="ChEBI" id="CHEBI:58017"/>
    </ligand>
</feature>
<feature type="binding site" evidence="1">
    <location>
        <position position="90"/>
    </location>
    <ligand>
        <name>Mg(2+)</name>
        <dbReference type="ChEBI" id="CHEBI:18420"/>
        <label>1</label>
    </ligand>
</feature>
<feature type="binding site" evidence="1">
    <location>
        <begin position="106"/>
        <end position="114"/>
    </location>
    <ligand>
        <name>5-phospho-alpha-D-ribose 1-diphosphate</name>
        <dbReference type="ChEBI" id="CHEBI:58017"/>
    </ligand>
</feature>
<feature type="binding site" evidence="1">
    <location>
        <position position="109"/>
    </location>
    <ligand>
        <name>anthranilate</name>
        <dbReference type="ChEBI" id="CHEBI:16567"/>
        <label>1</label>
    </ligand>
</feature>
<feature type="binding site" evidence="1">
    <location>
        <position position="118"/>
    </location>
    <ligand>
        <name>5-phospho-alpha-D-ribose 1-diphosphate</name>
        <dbReference type="ChEBI" id="CHEBI:58017"/>
    </ligand>
</feature>
<feature type="binding site" evidence="1">
    <location>
        <position position="163"/>
    </location>
    <ligand>
        <name>anthranilate</name>
        <dbReference type="ChEBI" id="CHEBI:16567"/>
        <label>2</label>
    </ligand>
</feature>
<feature type="binding site" evidence="1">
    <location>
        <position position="222"/>
    </location>
    <ligand>
        <name>Mg(2+)</name>
        <dbReference type="ChEBI" id="CHEBI:18420"/>
        <label>2</label>
    </ligand>
</feature>
<feature type="binding site" evidence="1">
    <location>
        <position position="223"/>
    </location>
    <ligand>
        <name>Mg(2+)</name>
        <dbReference type="ChEBI" id="CHEBI:18420"/>
        <label>1</label>
    </ligand>
</feature>
<feature type="binding site" evidence="1">
    <location>
        <position position="223"/>
    </location>
    <ligand>
        <name>Mg(2+)</name>
        <dbReference type="ChEBI" id="CHEBI:18420"/>
        <label>2</label>
    </ligand>
</feature>
<dbReference type="EC" id="2.4.2.18" evidence="1"/>
<dbReference type="EMBL" id="AE015929">
    <property type="protein sequence ID" value="AAO04647.1"/>
    <property type="molecule type" value="Genomic_DNA"/>
</dbReference>
<dbReference type="RefSeq" id="NP_764605.1">
    <property type="nucleotide sequence ID" value="NC_004461.1"/>
</dbReference>
<dbReference type="RefSeq" id="WP_001830976.1">
    <property type="nucleotide sequence ID" value="NZ_WBME01000002.1"/>
</dbReference>
<dbReference type="SMR" id="Q8CSN6"/>
<dbReference type="GeneID" id="50018823"/>
<dbReference type="KEGG" id="sep:SE_1050"/>
<dbReference type="PATRIC" id="fig|176280.10.peg.1026"/>
<dbReference type="eggNOG" id="COG0547">
    <property type="taxonomic scope" value="Bacteria"/>
</dbReference>
<dbReference type="HOGENOM" id="CLU_034315_3_0_9"/>
<dbReference type="OrthoDB" id="9806430at2"/>
<dbReference type="UniPathway" id="UPA00035">
    <property type="reaction ID" value="UER00041"/>
</dbReference>
<dbReference type="Proteomes" id="UP000001411">
    <property type="component" value="Chromosome"/>
</dbReference>
<dbReference type="GO" id="GO:0005829">
    <property type="term" value="C:cytosol"/>
    <property type="evidence" value="ECO:0007669"/>
    <property type="project" value="TreeGrafter"/>
</dbReference>
<dbReference type="GO" id="GO:0004048">
    <property type="term" value="F:anthranilate phosphoribosyltransferase activity"/>
    <property type="evidence" value="ECO:0007669"/>
    <property type="project" value="UniProtKB-UniRule"/>
</dbReference>
<dbReference type="GO" id="GO:0000287">
    <property type="term" value="F:magnesium ion binding"/>
    <property type="evidence" value="ECO:0007669"/>
    <property type="project" value="UniProtKB-UniRule"/>
</dbReference>
<dbReference type="GO" id="GO:0000162">
    <property type="term" value="P:L-tryptophan biosynthetic process"/>
    <property type="evidence" value="ECO:0007669"/>
    <property type="project" value="UniProtKB-UniRule"/>
</dbReference>
<dbReference type="Gene3D" id="3.40.1030.10">
    <property type="entry name" value="Nucleoside phosphorylase/phosphoribosyltransferase catalytic domain"/>
    <property type="match status" value="1"/>
</dbReference>
<dbReference type="Gene3D" id="1.20.970.10">
    <property type="entry name" value="Transferase, Pyrimidine Nucleoside Phosphorylase, Chain C"/>
    <property type="match status" value="1"/>
</dbReference>
<dbReference type="HAMAP" id="MF_00211">
    <property type="entry name" value="TrpD"/>
    <property type="match status" value="1"/>
</dbReference>
<dbReference type="InterPro" id="IPR005940">
    <property type="entry name" value="Anthranilate_Pribosyl_Tfrase"/>
</dbReference>
<dbReference type="InterPro" id="IPR000312">
    <property type="entry name" value="Glycosyl_Trfase_fam3"/>
</dbReference>
<dbReference type="InterPro" id="IPR035902">
    <property type="entry name" value="Nuc_phospho_transferase"/>
</dbReference>
<dbReference type="NCBIfam" id="TIGR01245">
    <property type="entry name" value="trpD"/>
    <property type="match status" value="1"/>
</dbReference>
<dbReference type="PANTHER" id="PTHR43285">
    <property type="entry name" value="ANTHRANILATE PHOSPHORIBOSYLTRANSFERASE"/>
    <property type="match status" value="1"/>
</dbReference>
<dbReference type="PANTHER" id="PTHR43285:SF2">
    <property type="entry name" value="ANTHRANILATE PHOSPHORIBOSYLTRANSFERASE"/>
    <property type="match status" value="1"/>
</dbReference>
<dbReference type="Pfam" id="PF00591">
    <property type="entry name" value="Glycos_transf_3"/>
    <property type="match status" value="1"/>
</dbReference>
<dbReference type="SUPFAM" id="SSF52418">
    <property type="entry name" value="Nucleoside phosphorylase/phosphoribosyltransferase catalytic domain"/>
    <property type="match status" value="1"/>
</dbReference>
<proteinExistence type="inferred from homology"/>
<organism>
    <name type="scientific">Staphylococcus epidermidis (strain ATCC 12228 / FDA PCI 1200)</name>
    <dbReference type="NCBI Taxonomy" id="176280"/>
    <lineage>
        <taxon>Bacteria</taxon>
        <taxon>Bacillati</taxon>
        <taxon>Bacillota</taxon>
        <taxon>Bacilli</taxon>
        <taxon>Bacillales</taxon>
        <taxon>Staphylococcaceae</taxon>
        <taxon>Staphylococcus</taxon>
    </lineage>
</organism>
<sequence length="331" mass="36546">MTLLEKIKQNKSLSKKDMQSFIVTLFDSNIETNVKVELLKAYTNKDMGQYELTYLVEYFIQTNYPNQPFYNKAMCVCGTGGDQSNSFNISTTVAFVVASAGVPVIKHGNKSITSHSGSTDVLHEMNIKTNKMNEVEQQLNLKGLAFISATDSYPMMKKLQSIRKSIATPTIFNLIGPLINPFKLTYQVMGVYEASQLENIAQTLKDLGRKRAILIHGANGMDEATLSGENIIYEVSSERALKKYSLKAEEVGLAYANNDTLIGGSPQTNKQIALNILSGTDHSSKRDVVLLNAGIALYVAEQVESIKHGVERAKYLIDTGMAMKQYLKMGG</sequence>
<accession>Q8CSN6</accession>
<name>TRPD_STAES</name>
<protein>
    <recommendedName>
        <fullName evidence="1">Anthranilate phosphoribosyltransferase</fullName>
        <ecNumber evidence="1">2.4.2.18</ecNumber>
    </recommendedName>
</protein>
<reference key="1">
    <citation type="journal article" date="2003" name="Mol. Microbiol.">
        <title>Genome-based analysis of virulence genes in a non-biofilm-forming Staphylococcus epidermidis strain (ATCC 12228).</title>
        <authorList>
            <person name="Zhang Y.-Q."/>
            <person name="Ren S.-X."/>
            <person name="Li H.-L."/>
            <person name="Wang Y.-X."/>
            <person name="Fu G."/>
            <person name="Yang J."/>
            <person name="Qin Z.-Q."/>
            <person name="Miao Y.-G."/>
            <person name="Wang W.-Y."/>
            <person name="Chen R.-S."/>
            <person name="Shen Y."/>
            <person name="Chen Z."/>
            <person name="Yuan Z.-H."/>
            <person name="Zhao G.-P."/>
            <person name="Qu D."/>
            <person name="Danchin A."/>
            <person name="Wen Y.-M."/>
        </authorList>
    </citation>
    <scope>NUCLEOTIDE SEQUENCE [LARGE SCALE GENOMIC DNA]</scope>
    <source>
        <strain>ATCC 12228 / FDA PCI 1200</strain>
    </source>
</reference>
<evidence type="ECO:0000255" key="1">
    <source>
        <dbReference type="HAMAP-Rule" id="MF_00211"/>
    </source>
</evidence>
<keyword id="KW-0028">Amino-acid biosynthesis</keyword>
<keyword id="KW-0057">Aromatic amino acid biosynthesis</keyword>
<keyword id="KW-0328">Glycosyltransferase</keyword>
<keyword id="KW-0460">Magnesium</keyword>
<keyword id="KW-0479">Metal-binding</keyword>
<keyword id="KW-0808">Transferase</keyword>
<keyword id="KW-0822">Tryptophan biosynthesis</keyword>
<gene>
    <name evidence="1" type="primary">trpD</name>
    <name type="ordered locus">SE_1050</name>
</gene>
<comment type="function">
    <text evidence="1">Catalyzes the transfer of the phosphoribosyl group of 5-phosphorylribose-1-pyrophosphate (PRPP) to anthranilate to yield N-(5'-phosphoribosyl)-anthranilate (PRA).</text>
</comment>
<comment type="catalytic activity">
    <reaction evidence="1">
        <text>N-(5-phospho-beta-D-ribosyl)anthranilate + diphosphate = 5-phospho-alpha-D-ribose 1-diphosphate + anthranilate</text>
        <dbReference type="Rhea" id="RHEA:11768"/>
        <dbReference type="ChEBI" id="CHEBI:16567"/>
        <dbReference type="ChEBI" id="CHEBI:18277"/>
        <dbReference type="ChEBI" id="CHEBI:33019"/>
        <dbReference type="ChEBI" id="CHEBI:58017"/>
        <dbReference type="EC" id="2.4.2.18"/>
    </reaction>
</comment>
<comment type="cofactor">
    <cofactor evidence="1">
        <name>Mg(2+)</name>
        <dbReference type="ChEBI" id="CHEBI:18420"/>
    </cofactor>
    <text evidence="1">Binds 2 magnesium ions per monomer.</text>
</comment>
<comment type="pathway">
    <text evidence="1">Amino-acid biosynthesis; L-tryptophan biosynthesis; L-tryptophan from chorismate: step 2/5.</text>
</comment>
<comment type="subunit">
    <text evidence="1">Homodimer.</text>
</comment>
<comment type="similarity">
    <text evidence="1">Belongs to the anthranilate phosphoribosyltransferase family.</text>
</comment>